<sequence length="1158" mass="130929">MAAVRGAPLLSCLLALLALCPGGRPQTVLTDDEIEEFLEGFLSELEPEPREDDVEAPPPPEPTPRVRKAQAGGKPGKRPGTAAEVPPEKTKDKGKKGKKDKGPKVPKESLEGSPRPPKKGKEKPPKATKKPKEKPPKATKKPKEKPPKATKKPKEKPPKATKKPPSGKRPPILAPSETLEWPLPPPPSPGPEELPQEGGAPLSNNWQNPGEETHVEAREHQPEPEEETEQPTLDYNDQIEREDYEDFEYIRRQKQPRPPPSRRRRPERVWPEPPEEKAPAPAPEERIEPPVKPLLPPLPPDYGDGYVIPNYDDMDYYFGPPPPQKPDAERQTDEEKEELKKPKKEDSSPKEETDKWAVEKGKDHKEPRKGEELEEEWTPTEKVKCPPIGMESHRIEDNQIRASSMLRHGLGAQRGRLNMQTGATEDDYYDGAWCAEDDARTQWIEVDTRRTTRFTGVITQGRDSSIHDDFVTTFFVGFSNDSQTWVMYTNGYEEMTFHGNVDKDTPVLSELPEPVVARFIRIYPLTWNGSLCMRLEVLGCSVAPVYSYYAQNEVVATDDLDFRHHSYKDMRQLMKVVNEECPTITRTYSLGKSSRGLKIYAMEISDNPGEHELGEPEFRYTAGIHGNEVLGRELLLLLMQYLCREYRDGNPRVRSLVQDTRIHLVPSLNPDGYEVAAQMGSEFGNWALGLWTEEGFDIFEDFPDLNSVLWGAEERKWVPYRVPNNNLPIPERYLSPDATVSTEVRAIIAWMEKNPFVLGANLNGGERLVSYPYDMARTPTQEQLLAAAMAAARGEDEDEVSEAQETPDHAIFRWLAISFASAHLTLTEPYRGGCQAQDYTGGMGIVNGAKWNPRTGTINDFSYLHTNCLELSFYLGCDKFPHESELPREWENNKEALLTFMEQVHRGIKGVVTDEQGIPIANATISVSGINHGVKTASGGDYWRILNPGEYRVTAHAEGYTPSAKTCNVDYDIGATQCNFILARSNWKRIREIMAMNGNRPIPHIDPSRPMTPQQRRLQQRRLQHRLRLRAQMRLRRLNATTTLGPHTVPPTLPPAPATTLSTTIEPWGLIPPTTAGWEESETETYTEVVTEFGTEVEPEFGTKVEPEFETQLEPEFETQLEPEFEEEEEEEKEEEIATGQAFPFTTVETYTVNFGDF</sequence>
<organism>
    <name type="scientific">Homo sapiens</name>
    <name type="common">Human</name>
    <dbReference type="NCBI Taxonomy" id="9606"/>
    <lineage>
        <taxon>Eukaryota</taxon>
        <taxon>Metazoa</taxon>
        <taxon>Chordata</taxon>
        <taxon>Craniata</taxon>
        <taxon>Vertebrata</taxon>
        <taxon>Euteleostomi</taxon>
        <taxon>Mammalia</taxon>
        <taxon>Eutheria</taxon>
        <taxon>Euarchontoglires</taxon>
        <taxon>Primates</taxon>
        <taxon>Haplorrhini</taxon>
        <taxon>Catarrhini</taxon>
        <taxon>Hominidae</taxon>
        <taxon>Homo</taxon>
    </lineage>
</organism>
<proteinExistence type="evidence at protein level"/>
<comment type="function">
    <molecule>Isoform 1</molecule>
    <text evidence="9">As a positive regulator of collagen fibrillogenesis, it is probably involved in the organization and remodeling of the extracellular matrix.</text>
</comment>
<comment type="function">
    <molecule>Isoform 2</molecule>
    <text evidence="2">May positively regulate MAP-kinase activity in adipocytes, leading to enhanced adipocyte proliferation and reduced adipocyte differentiation. May also positively regulate NF-kappa-B activity in macrophages by promoting the phosphorylation and subsequent degradation of I-kappa-B-alpha (NFKBIA), leading to enhanced macrophage inflammatory responsiveness. Can act as a transcriptional repressor.</text>
</comment>
<comment type="subunit">
    <text evidence="2 9">Isoform 1: Interacts with different types of collagen, including collagens I, III, and V (PubMed:29606302). Isoform 2: Interacts with GNG5, NFKBIA, MAPK1, MAPK3 and PTEN. Interaction with MAPK1 may stimulate DNA-binding. May interact with calmodulin. Binds to DNA in vitro.</text>
</comment>
<comment type="subcellular location">
    <molecule>Isoform 1</molecule>
    <subcellularLocation>
        <location evidence="2">Secreted</location>
    </subcellularLocation>
</comment>
<comment type="subcellular location">
    <molecule>Isoform 2</molecule>
    <subcellularLocation>
        <location evidence="2">Cytoplasm</location>
    </subcellularLocation>
    <subcellularLocation>
        <location evidence="2">Nucleus</location>
    </subcellularLocation>
</comment>
<comment type="alternative products">
    <event type="alternative splicing"/>
    <isoform>
        <id>Q8IUX7-1</id>
        <name>1</name>
        <sequence type="displayed"/>
    </isoform>
    <isoform>
        <id>Q8IUX7-2</id>
        <name>2</name>
        <sequence type="described" ref="VSP_033467 VSP_033468 VSP_033469"/>
    </isoform>
</comment>
<comment type="tissue specificity">
    <text evidence="10">Expressed in osteoblast and visceral fat.</text>
</comment>
<comment type="domain">
    <molecule>Isoform 1</molecule>
    <text evidence="9">The F5/8 type C domain binds to different types of collagen, including collagens I, III, and V.</text>
</comment>
<comment type="PTM">
    <text evidence="1">Phosphorylated by MAPK1 in vitro.</text>
</comment>
<comment type="disease" evidence="8 9">
    <disease id="DI-05255">
        <name>Ehlers-Danlos syndrome, classic-like, 2</name>
        <acronym>EDSCLL2</acronym>
        <description>A variant form of Ehlers-Danlos syndrome, a connective tissue disorder. EDSCLL2 patients show severe joint and skin laxity, osteoporosis affecting the hips and spine, osteoarthritis, soft redundant skin that can be acrogeria-like, delayed wound healing with abnormal atrophic scarring, and shoulder, hip, knee, and ankle dislocations. Additional variable features include gastrointestinal and genitourinary manifestations (bowel rupture, gut dysmotility, cryptorchidism, and hernias), vascular complications (mitral valve prolapse and aortic root dilation), and skeletal anomalies. EDSCLL2 inheritance is autosomal recessive.</description>
        <dbReference type="MIM" id="618000"/>
    </disease>
    <text>The disease is caused by variants affecting the gene represented in this entry.</text>
</comment>
<comment type="similarity">
    <text evidence="13">Belongs to the peptidase M14 family.</text>
</comment>
<comment type="caution">
    <text evidence="13">Although related to peptidase M14 family, lacks the active site residues and zinc-binding sites, suggesting that it has no carboxypeptidase activity.</text>
</comment>
<comment type="sequence caution" evidence="13">
    <conflict type="erroneous initiation">
        <sequence resource="EMBL-CDS" id="BAD92981"/>
    </conflict>
</comment>
<dbReference type="EMBL" id="AF053944">
    <property type="protein sequence ID" value="AAC25585.1"/>
    <property type="molecule type" value="mRNA"/>
</dbReference>
<dbReference type="EMBL" id="AK127541">
    <property type="protein sequence ID" value="BAC87026.1"/>
    <property type="molecule type" value="mRNA"/>
</dbReference>
<dbReference type="EMBL" id="AB209744">
    <property type="protein sequence ID" value="BAD92981.1"/>
    <property type="status" value="ALT_INIT"/>
    <property type="molecule type" value="mRNA"/>
</dbReference>
<dbReference type="EMBL" id="CH236960">
    <property type="protein sequence ID" value="EAL23768.1"/>
    <property type="molecule type" value="Genomic_DNA"/>
</dbReference>
<dbReference type="EMBL" id="CH471128">
    <property type="protein sequence ID" value="EAW61119.1"/>
    <property type="molecule type" value="Genomic_DNA"/>
</dbReference>
<dbReference type="EMBL" id="BC038588">
    <property type="protein sequence ID" value="AAH38588.1"/>
    <property type="molecule type" value="mRNA"/>
</dbReference>
<dbReference type="EMBL" id="D86479">
    <property type="protein sequence ID" value="BAA13094.1"/>
    <property type="molecule type" value="mRNA"/>
</dbReference>
<dbReference type="CCDS" id="CCDS5476.1">
    <molecule id="Q8IUX7-1"/>
</dbReference>
<dbReference type="PIR" id="JC5256">
    <property type="entry name" value="JC5256"/>
</dbReference>
<dbReference type="RefSeq" id="NP_001120.3">
    <molecule id="Q8IUX7-1"/>
    <property type="nucleotide sequence ID" value="NM_001129.4"/>
</dbReference>
<dbReference type="SMR" id="Q8IUX7"/>
<dbReference type="BioGRID" id="106674">
    <property type="interactions" value="6"/>
</dbReference>
<dbReference type="FunCoup" id="Q8IUX7">
    <property type="interactions" value="231"/>
</dbReference>
<dbReference type="IntAct" id="Q8IUX7">
    <property type="interactions" value="3"/>
</dbReference>
<dbReference type="STRING" id="9606.ENSP00000223357"/>
<dbReference type="MEROPS" id="M14.951"/>
<dbReference type="GlyConnect" id="995">
    <property type="glycosylation" value="18 N-Linked glycans (3 sites)"/>
</dbReference>
<dbReference type="GlyCosmos" id="Q8IUX7">
    <property type="glycosylation" value="15 sites, 22 glycans"/>
</dbReference>
<dbReference type="GlyGen" id="Q8IUX7">
    <property type="glycosylation" value="16 sites, 58 N-linked glycans (3 sites), 4 O-linked glycans (12 sites)"/>
</dbReference>
<dbReference type="iPTMnet" id="Q8IUX7"/>
<dbReference type="PhosphoSitePlus" id="Q8IUX7"/>
<dbReference type="BioMuta" id="AEBP1"/>
<dbReference type="DMDM" id="74728002"/>
<dbReference type="MassIVE" id="Q8IUX7"/>
<dbReference type="PaxDb" id="9606-ENSP00000223357"/>
<dbReference type="PeptideAtlas" id="Q8IUX7"/>
<dbReference type="ProteomicsDB" id="70626">
    <molecule id="Q8IUX7-1"/>
</dbReference>
<dbReference type="ProteomicsDB" id="70627">
    <molecule id="Q8IUX7-2"/>
</dbReference>
<dbReference type="Antibodypedia" id="4099">
    <property type="antibodies" value="195 antibodies from 29 providers"/>
</dbReference>
<dbReference type="DNASU" id="165"/>
<dbReference type="Ensembl" id="ENST00000223357.8">
    <molecule id="Q8IUX7-1"/>
    <property type="protein sequence ID" value="ENSP00000223357.3"/>
    <property type="gene ID" value="ENSG00000106624.11"/>
</dbReference>
<dbReference type="Ensembl" id="ENST00000450684.2">
    <molecule id="Q8IUX7-2"/>
    <property type="protein sequence ID" value="ENSP00000398878.2"/>
    <property type="gene ID" value="ENSG00000106624.11"/>
</dbReference>
<dbReference type="GeneID" id="165"/>
<dbReference type="KEGG" id="hsa:165"/>
<dbReference type="MANE-Select" id="ENST00000223357.8">
    <property type="protein sequence ID" value="ENSP00000223357.3"/>
    <property type="RefSeq nucleotide sequence ID" value="NM_001129.5"/>
    <property type="RefSeq protein sequence ID" value="NP_001120.3"/>
</dbReference>
<dbReference type="UCSC" id="uc003tkb.5">
    <molecule id="Q8IUX7-1"/>
    <property type="organism name" value="human"/>
</dbReference>
<dbReference type="AGR" id="HGNC:303"/>
<dbReference type="CTD" id="165"/>
<dbReference type="DisGeNET" id="165"/>
<dbReference type="GeneCards" id="AEBP1"/>
<dbReference type="HGNC" id="HGNC:303">
    <property type="gene designation" value="AEBP1"/>
</dbReference>
<dbReference type="HPA" id="ENSG00000106624">
    <property type="expression patterns" value="Low tissue specificity"/>
</dbReference>
<dbReference type="MalaCards" id="AEBP1"/>
<dbReference type="MIM" id="602981">
    <property type="type" value="gene"/>
</dbReference>
<dbReference type="MIM" id="618000">
    <property type="type" value="phenotype"/>
</dbReference>
<dbReference type="neXtProt" id="NX_Q8IUX7"/>
<dbReference type="OpenTargets" id="ENSG00000106624"/>
<dbReference type="Orphanet" id="536532">
    <property type="disease" value="Classical-like Ehlers-Danlos syndrome type 2"/>
</dbReference>
<dbReference type="PharmGKB" id="PA24604"/>
<dbReference type="VEuPathDB" id="HostDB:ENSG00000106624"/>
<dbReference type="eggNOG" id="KOG2649">
    <property type="taxonomic scope" value="Eukaryota"/>
</dbReference>
<dbReference type="GeneTree" id="ENSGT00940000158323"/>
<dbReference type="HOGENOM" id="CLU_006722_0_1_1"/>
<dbReference type="InParanoid" id="Q8IUX7"/>
<dbReference type="OMA" id="VIMYIPE"/>
<dbReference type="OrthoDB" id="10249045at2759"/>
<dbReference type="PAN-GO" id="Q8IUX7">
    <property type="GO annotations" value="3 GO annotations based on evolutionary models"/>
</dbReference>
<dbReference type="PhylomeDB" id="Q8IUX7"/>
<dbReference type="TreeFam" id="TF315592"/>
<dbReference type="PathwayCommons" id="Q8IUX7"/>
<dbReference type="SignaLink" id="Q8IUX7"/>
<dbReference type="SIGNOR" id="Q8IUX7"/>
<dbReference type="BioGRID-ORCS" id="165">
    <property type="hits" value="15 hits in 1158 CRISPR screens"/>
</dbReference>
<dbReference type="ChiTaRS" id="AEBP1">
    <property type="organism name" value="human"/>
</dbReference>
<dbReference type="GenomeRNAi" id="165"/>
<dbReference type="Pharos" id="Q8IUX7">
    <property type="development level" value="Tbio"/>
</dbReference>
<dbReference type="PRO" id="PR:Q8IUX7"/>
<dbReference type="Proteomes" id="UP000005640">
    <property type="component" value="Chromosome 7"/>
</dbReference>
<dbReference type="RNAct" id="Q8IUX7">
    <property type="molecule type" value="protein"/>
</dbReference>
<dbReference type="Bgee" id="ENSG00000106624">
    <property type="expression patterns" value="Expressed in tendon of biceps brachii and 186 other cell types or tissues"/>
</dbReference>
<dbReference type="ExpressionAtlas" id="Q8IUX7">
    <property type="expression patterns" value="baseline and differential"/>
</dbReference>
<dbReference type="GO" id="GO:0062023">
    <property type="term" value="C:collagen-containing extracellular matrix"/>
    <property type="evidence" value="ECO:0007005"/>
    <property type="project" value="BHF-UCL"/>
</dbReference>
<dbReference type="GO" id="GO:0005737">
    <property type="term" value="C:cytoplasm"/>
    <property type="evidence" value="ECO:0007669"/>
    <property type="project" value="UniProtKB-SubCell"/>
</dbReference>
<dbReference type="GO" id="GO:0070062">
    <property type="term" value="C:extracellular exosome"/>
    <property type="evidence" value="ECO:0007005"/>
    <property type="project" value="UniProtKB"/>
</dbReference>
<dbReference type="GO" id="GO:0005576">
    <property type="term" value="C:extracellular region"/>
    <property type="evidence" value="ECO:0007005"/>
    <property type="project" value="BHF-UCL"/>
</dbReference>
<dbReference type="GO" id="GO:0005615">
    <property type="term" value="C:extracellular space"/>
    <property type="evidence" value="ECO:0007005"/>
    <property type="project" value="BHF-UCL"/>
</dbReference>
<dbReference type="GO" id="GO:0005634">
    <property type="term" value="C:nucleus"/>
    <property type="evidence" value="ECO:0007669"/>
    <property type="project" value="UniProtKB-SubCell"/>
</dbReference>
<dbReference type="GO" id="GO:0005516">
    <property type="term" value="F:calmodulin binding"/>
    <property type="evidence" value="ECO:0007669"/>
    <property type="project" value="UniProtKB-KW"/>
</dbReference>
<dbReference type="GO" id="GO:0004180">
    <property type="term" value="F:carboxypeptidase activity"/>
    <property type="evidence" value="ECO:0007669"/>
    <property type="project" value="Ensembl"/>
</dbReference>
<dbReference type="GO" id="GO:0005518">
    <property type="term" value="F:collagen binding"/>
    <property type="evidence" value="ECO:0000314"/>
    <property type="project" value="UniProtKB"/>
</dbReference>
<dbReference type="GO" id="GO:0001227">
    <property type="term" value="F:DNA-binding transcription repressor activity, RNA polymerase II-specific"/>
    <property type="evidence" value="ECO:0000314"/>
    <property type="project" value="NTNU_SB"/>
</dbReference>
<dbReference type="GO" id="GO:0000977">
    <property type="term" value="F:RNA polymerase II transcription regulatory region sequence-specific DNA binding"/>
    <property type="evidence" value="ECO:0000314"/>
    <property type="project" value="NTNU_SB"/>
</dbReference>
<dbReference type="GO" id="GO:0008270">
    <property type="term" value="F:zinc ion binding"/>
    <property type="evidence" value="ECO:0007669"/>
    <property type="project" value="InterPro"/>
</dbReference>
<dbReference type="GO" id="GO:0000122">
    <property type="term" value="P:negative regulation of transcription by RNA polymerase II"/>
    <property type="evidence" value="ECO:0000315"/>
    <property type="project" value="NTNU_SB"/>
</dbReference>
<dbReference type="GO" id="GO:0006508">
    <property type="term" value="P:proteolysis"/>
    <property type="evidence" value="ECO:0007669"/>
    <property type="project" value="InterPro"/>
</dbReference>
<dbReference type="GO" id="GO:1904026">
    <property type="term" value="P:regulation of collagen fibril organization"/>
    <property type="evidence" value="ECO:0000314"/>
    <property type="project" value="UniProtKB"/>
</dbReference>
<dbReference type="GO" id="GO:0006355">
    <property type="term" value="P:regulation of DNA-templated transcription"/>
    <property type="evidence" value="ECO:0000318"/>
    <property type="project" value="GO_Central"/>
</dbReference>
<dbReference type="CDD" id="cd00057">
    <property type="entry name" value="FA58C"/>
    <property type="match status" value="1"/>
</dbReference>
<dbReference type="CDD" id="cd11308">
    <property type="entry name" value="Peptidase_M14NE-CP-C_like"/>
    <property type="match status" value="1"/>
</dbReference>
<dbReference type="FunFam" id="2.60.120.260:FF:000068">
    <property type="entry name" value="Adipocyte enhancer-binding protein 1"/>
    <property type="match status" value="1"/>
</dbReference>
<dbReference type="FunFam" id="3.40.630.10:FF:000007">
    <property type="entry name" value="Carboxypeptidase X (M14 family), member 1"/>
    <property type="match status" value="1"/>
</dbReference>
<dbReference type="FunFam" id="2.60.40.1120:FF:000007">
    <property type="entry name" value="Carboxypeptidase X, M14 family member 2"/>
    <property type="match status" value="1"/>
</dbReference>
<dbReference type="Gene3D" id="2.60.40.1120">
    <property type="entry name" value="Carboxypeptidase-like, regulatory domain"/>
    <property type="match status" value="1"/>
</dbReference>
<dbReference type="Gene3D" id="2.60.120.260">
    <property type="entry name" value="Galactose-binding domain-like"/>
    <property type="match status" value="1"/>
</dbReference>
<dbReference type="Gene3D" id="3.40.630.10">
    <property type="entry name" value="Zn peptidases"/>
    <property type="match status" value="1"/>
</dbReference>
<dbReference type="InterPro" id="IPR008969">
    <property type="entry name" value="CarboxyPept-like_regulatory"/>
</dbReference>
<dbReference type="InterPro" id="IPR000421">
    <property type="entry name" value="FA58C"/>
</dbReference>
<dbReference type="InterPro" id="IPR008979">
    <property type="entry name" value="Galactose-bd-like_sf"/>
</dbReference>
<dbReference type="InterPro" id="IPR000834">
    <property type="entry name" value="Peptidase_M14"/>
</dbReference>
<dbReference type="InterPro" id="IPR050753">
    <property type="entry name" value="Peptidase_M14_domain"/>
</dbReference>
<dbReference type="PANTHER" id="PTHR11532:SF48">
    <property type="entry name" value="ADIPOCYTE ENHANCER-BINDING PROTEIN 1"/>
    <property type="match status" value="1"/>
</dbReference>
<dbReference type="PANTHER" id="PTHR11532">
    <property type="entry name" value="PROTEASE M14 CARBOXYPEPTIDASE"/>
    <property type="match status" value="1"/>
</dbReference>
<dbReference type="Pfam" id="PF13620">
    <property type="entry name" value="CarboxypepD_reg"/>
    <property type="match status" value="1"/>
</dbReference>
<dbReference type="Pfam" id="PF00754">
    <property type="entry name" value="F5_F8_type_C"/>
    <property type="match status" value="1"/>
</dbReference>
<dbReference type="Pfam" id="PF00246">
    <property type="entry name" value="Peptidase_M14"/>
    <property type="match status" value="1"/>
</dbReference>
<dbReference type="PRINTS" id="PR00765">
    <property type="entry name" value="CRBOXYPTASEA"/>
</dbReference>
<dbReference type="SMART" id="SM00231">
    <property type="entry name" value="FA58C"/>
    <property type="match status" value="1"/>
</dbReference>
<dbReference type="SMART" id="SM00631">
    <property type="entry name" value="Zn_pept"/>
    <property type="match status" value="1"/>
</dbReference>
<dbReference type="SUPFAM" id="SSF49464">
    <property type="entry name" value="Carboxypeptidase regulatory domain-like"/>
    <property type="match status" value="1"/>
</dbReference>
<dbReference type="SUPFAM" id="SSF49785">
    <property type="entry name" value="Galactose-binding domain-like"/>
    <property type="match status" value="1"/>
</dbReference>
<dbReference type="SUPFAM" id="SSF53187">
    <property type="entry name" value="Zn-dependent exopeptidases"/>
    <property type="match status" value="1"/>
</dbReference>
<dbReference type="PROSITE" id="PS00132">
    <property type="entry name" value="CARBOXYPEPT_ZN_1"/>
    <property type="match status" value="1"/>
</dbReference>
<dbReference type="PROSITE" id="PS01285">
    <property type="entry name" value="FA58C_1"/>
    <property type="match status" value="1"/>
</dbReference>
<dbReference type="PROSITE" id="PS01286">
    <property type="entry name" value="FA58C_2"/>
    <property type="match status" value="1"/>
</dbReference>
<dbReference type="PROSITE" id="PS50022">
    <property type="entry name" value="FA58C_3"/>
    <property type="match status" value="1"/>
</dbReference>
<dbReference type="PROSITE" id="PS52035">
    <property type="entry name" value="PEPTIDASE_M14"/>
    <property type="match status" value="1"/>
</dbReference>
<name>AEBP1_HUMAN</name>
<keyword id="KW-0025">Alternative splicing</keyword>
<keyword id="KW-0112">Calmodulin-binding</keyword>
<keyword id="KW-0963">Cytoplasm</keyword>
<keyword id="KW-0225">Disease variant</keyword>
<keyword id="KW-0238">DNA-binding</keyword>
<keyword id="KW-0248">Ehlers-Danlos syndrome</keyword>
<keyword id="KW-0325">Glycoprotein</keyword>
<keyword id="KW-0539">Nucleus</keyword>
<keyword id="KW-1267">Proteomics identification</keyword>
<keyword id="KW-1185">Reference proteome</keyword>
<keyword id="KW-0678">Repressor</keyword>
<keyword id="KW-0964">Secreted</keyword>
<keyword id="KW-0732">Signal</keyword>
<keyword id="KW-0804">Transcription</keyword>
<keyword id="KW-0805">Transcription regulation</keyword>
<feature type="signal peptide" evidence="3">
    <location>
        <begin position="1"/>
        <end position="25"/>
    </location>
</feature>
<feature type="chain" id="PRO_0000333189" description="Adipocyte enhancer-binding protein 1">
    <location>
        <begin position="26"/>
        <end position="1158"/>
    </location>
</feature>
<feature type="domain" description="F5/8 type C" evidence="4">
    <location>
        <begin position="383"/>
        <end position="540"/>
    </location>
</feature>
<feature type="domain" description="Peptidase M14" evidence="5">
    <location>
        <begin position="563"/>
        <end position="904"/>
    </location>
</feature>
<feature type="region of interest" description="Disordered" evidence="6">
    <location>
        <begin position="41"/>
        <end position="387"/>
    </location>
</feature>
<feature type="region of interest" description="Required for DNA-binding and interaction with NFKBIA" evidence="1">
    <location>
        <begin position="390"/>
        <end position="555"/>
    </location>
</feature>
<feature type="region of interest" description="Interaction with MAPK1 and MAPK3" evidence="1">
    <location>
        <begin position="421"/>
        <end position="624"/>
    </location>
</feature>
<feature type="region of interest" description="Interaction with PTEN" evidence="1">
    <location>
        <begin position="555"/>
        <end position="985"/>
    </location>
</feature>
<feature type="region of interest" description="Required for transcriptional repression" evidence="1">
    <location>
        <begin position="941"/>
        <end position="1158"/>
    </location>
</feature>
<feature type="region of interest" description="Interaction with MAPK1 and MAPK3" evidence="1">
    <location>
        <begin position="1006"/>
        <end position="1158"/>
    </location>
</feature>
<feature type="region of interest" description="Disordered" evidence="6">
    <location>
        <begin position="1108"/>
        <end position="1141"/>
    </location>
</feature>
<feature type="compositionally biased region" description="Acidic residues" evidence="6">
    <location>
        <begin position="45"/>
        <end position="55"/>
    </location>
</feature>
<feature type="compositionally biased region" description="Basic and acidic residues" evidence="6">
    <location>
        <begin position="100"/>
        <end position="110"/>
    </location>
</feature>
<feature type="compositionally biased region" description="Basic residues" evidence="6">
    <location>
        <begin position="116"/>
        <end position="166"/>
    </location>
</feature>
<feature type="compositionally biased region" description="Pro residues" evidence="6">
    <location>
        <begin position="182"/>
        <end position="192"/>
    </location>
</feature>
<feature type="compositionally biased region" description="Low complexity" evidence="6">
    <location>
        <begin position="193"/>
        <end position="202"/>
    </location>
</feature>
<feature type="compositionally biased region" description="Basic and acidic residues" evidence="6">
    <location>
        <begin position="211"/>
        <end position="223"/>
    </location>
</feature>
<feature type="compositionally biased region" description="Basic residues" evidence="6">
    <location>
        <begin position="252"/>
        <end position="266"/>
    </location>
</feature>
<feature type="compositionally biased region" description="Basic and acidic residues" evidence="6">
    <location>
        <begin position="267"/>
        <end position="289"/>
    </location>
</feature>
<feature type="compositionally biased region" description="Pro residues" evidence="6">
    <location>
        <begin position="290"/>
        <end position="300"/>
    </location>
</feature>
<feature type="compositionally biased region" description="Basic and acidic residues" evidence="6">
    <location>
        <begin position="326"/>
        <end position="371"/>
    </location>
</feature>
<feature type="compositionally biased region" description="Acidic residues" evidence="6">
    <location>
        <begin position="1108"/>
        <end position="1137"/>
    </location>
</feature>
<feature type="glycosylation site" description="N-linked (GlcNAc...) asparagine" evidence="7">
    <location>
        <position position="528"/>
    </location>
</feature>
<feature type="glycosylation site" description="N-linked (GlcNAc...) asparagine" evidence="7">
    <location>
        <position position="922"/>
    </location>
</feature>
<feature type="splice variant" id="VSP_033467" description="In isoform 2." evidence="12">
    <location>
        <begin position="1"/>
        <end position="457"/>
    </location>
</feature>
<feature type="splice variant" id="VSP_033468" description="In isoform 2." evidence="12">
    <original>ITQGRDSSIHDDFVTTFFVGFSNDSQTWVMYTNGYEEM</original>
    <variation>MRKWWAPCPGSWLCSHCLGEGWALRGAGSTALRPASPQ</variation>
    <location>
        <begin position="458"/>
        <end position="495"/>
    </location>
</feature>
<feature type="splice variant" id="VSP_033469" description="In isoform 2." evidence="12">
    <original>AP</original>
    <variation>ARECGGLAGALSGGGVLGWASRHPAKDNPASLAA</variation>
    <location>
        <begin position="543"/>
        <end position="544"/>
    </location>
</feature>
<feature type="sequence variant" id="VAR_043118" description="In dbSNP:rs2537188.">
    <original>P</original>
    <variation>T</variation>
    <location>
        <position position="273"/>
    </location>
</feature>
<feature type="sequence variant" id="VAR_080664" description="In EDSCLL2." evidence="9">
    <location>
        <begin position="581"/>
        <end position="1158"/>
    </location>
</feature>
<feature type="sequence variant" id="VAR_043119" description="In dbSNP:rs11770649.">
    <original>D</original>
    <variation>E</variation>
    <location>
        <position position="648"/>
    </location>
</feature>
<feature type="sequence variant" id="VAR_043120" description="In dbSNP:rs4724285.">
    <original>P</original>
    <variation>L</variation>
    <location>
        <position position="1001"/>
    </location>
</feature>
<feature type="sequence variant" id="VAR_043121" description="In dbSNP:rs13928." evidence="11">
    <original>K</original>
    <variation>E</variation>
    <location>
        <position position="1133"/>
    </location>
</feature>
<feature type="sequence variant" id="VAR_043122" description="In dbSNP:rs13898.">
    <original>V</original>
    <variation>I</variation>
    <location>
        <position position="1148"/>
    </location>
</feature>
<feature type="sequence conflict" description="In Ref. 1; AAC25585." evidence="13" ref="1">
    <original>K</original>
    <variation>E</variation>
    <location>
        <position position="145"/>
    </location>
</feature>
<feature type="sequence conflict" description="In Ref. 1; AAC25585." evidence="13" ref="1">
    <original>R</original>
    <variation>Q</variation>
    <location>
        <position position="218"/>
    </location>
</feature>
<feature type="sequence conflict" description="In Ref. 2; BAC87026." evidence="13" ref="2">
    <original>D</original>
    <variation>G</variation>
    <location>
        <position position="569"/>
    </location>
</feature>
<feature type="sequence conflict" description="In Ref. 2; BAC87026." evidence="13" ref="2">
    <original>R</original>
    <variation>G</variation>
    <location>
        <position position="715"/>
    </location>
</feature>
<feature type="sequence conflict" description="In Ref. 2; BAC87026." evidence="13" ref="2">
    <original>S</original>
    <variation>G</variation>
    <location>
        <position position="884"/>
    </location>
</feature>
<feature type="sequence conflict" description="In Ref. 3; BAD92981." evidence="13" ref="3">
    <original>E</original>
    <variation>G</variation>
    <location>
        <position position="1079"/>
    </location>
</feature>
<reference key="1">
    <citation type="journal article" date="1998" name="J. Biol. Chem.">
        <title>Aortic carboxypeptidase-like protein, a novel protein with discoidin and carboxypeptidase-like domains, is up-regulated during vascular smooth muscle cell differentiation.</title>
        <authorList>
            <person name="Layne M.D."/>
            <person name="Endege W.O."/>
            <person name="Jain M.K."/>
            <person name="Yet S.-F."/>
            <person name="Hsieh C.-M."/>
            <person name="Chin M.T."/>
            <person name="Perrella M.A."/>
            <person name="Blanar M.A."/>
            <person name="Haber E."/>
            <person name="Lee M.-E."/>
        </authorList>
    </citation>
    <scope>NUCLEOTIDE SEQUENCE [MRNA] (ISOFORM 1)</scope>
    <source>
        <tissue>Aortic smooth muscle</tissue>
    </source>
</reference>
<reference key="2">
    <citation type="journal article" date="2004" name="Nat. Genet.">
        <title>Complete sequencing and characterization of 21,243 full-length human cDNAs.</title>
        <authorList>
            <person name="Ota T."/>
            <person name="Suzuki Y."/>
            <person name="Nishikawa T."/>
            <person name="Otsuki T."/>
            <person name="Sugiyama T."/>
            <person name="Irie R."/>
            <person name="Wakamatsu A."/>
            <person name="Hayashi K."/>
            <person name="Sato H."/>
            <person name="Nagai K."/>
            <person name="Kimura K."/>
            <person name="Makita H."/>
            <person name="Sekine M."/>
            <person name="Obayashi M."/>
            <person name="Nishi T."/>
            <person name="Shibahara T."/>
            <person name="Tanaka T."/>
            <person name="Ishii S."/>
            <person name="Yamamoto J."/>
            <person name="Saito K."/>
            <person name="Kawai Y."/>
            <person name="Isono Y."/>
            <person name="Nakamura Y."/>
            <person name="Nagahari K."/>
            <person name="Murakami K."/>
            <person name="Yasuda T."/>
            <person name="Iwayanagi T."/>
            <person name="Wagatsuma M."/>
            <person name="Shiratori A."/>
            <person name="Sudo H."/>
            <person name="Hosoiri T."/>
            <person name="Kaku Y."/>
            <person name="Kodaira H."/>
            <person name="Kondo H."/>
            <person name="Sugawara M."/>
            <person name="Takahashi M."/>
            <person name="Kanda K."/>
            <person name="Yokoi T."/>
            <person name="Furuya T."/>
            <person name="Kikkawa E."/>
            <person name="Omura Y."/>
            <person name="Abe K."/>
            <person name="Kamihara K."/>
            <person name="Katsuta N."/>
            <person name="Sato K."/>
            <person name="Tanikawa M."/>
            <person name="Yamazaki M."/>
            <person name="Ninomiya K."/>
            <person name="Ishibashi T."/>
            <person name="Yamashita H."/>
            <person name="Murakawa K."/>
            <person name="Fujimori K."/>
            <person name="Tanai H."/>
            <person name="Kimata M."/>
            <person name="Watanabe M."/>
            <person name="Hiraoka S."/>
            <person name="Chiba Y."/>
            <person name="Ishida S."/>
            <person name="Ono Y."/>
            <person name="Takiguchi S."/>
            <person name="Watanabe S."/>
            <person name="Yosida M."/>
            <person name="Hotuta T."/>
            <person name="Kusano J."/>
            <person name="Kanehori K."/>
            <person name="Takahashi-Fujii A."/>
            <person name="Hara H."/>
            <person name="Tanase T.-O."/>
            <person name="Nomura Y."/>
            <person name="Togiya S."/>
            <person name="Komai F."/>
            <person name="Hara R."/>
            <person name="Takeuchi K."/>
            <person name="Arita M."/>
            <person name="Imose N."/>
            <person name="Musashino K."/>
            <person name="Yuuki H."/>
            <person name="Oshima A."/>
            <person name="Sasaki N."/>
            <person name="Aotsuka S."/>
            <person name="Yoshikawa Y."/>
            <person name="Matsunawa H."/>
            <person name="Ichihara T."/>
            <person name="Shiohata N."/>
            <person name="Sano S."/>
            <person name="Moriya S."/>
            <person name="Momiyama H."/>
            <person name="Satoh N."/>
            <person name="Takami S."/>
            <person name="Terashima Y."/>
            <person name="Suzuki O."/>
            <person name="Nakagawa S."/>
            <person name="Senoh A."/>
            <person name="Mizoguchi H."/>
            <person name="Goto Y."/>
            <person name="Shimizu F."/>
            <person name="Wakebe H."/>
            <person name="Hishigaki H."/>
            <person name="Watanabe T."/>
            <person name="Sugiyama A."/>
            <person name="Takemoto M."/>
            <person name="Kawakami B."/>
            <person name="Yamazaki M."/>
            <person name="Watanabe K."/>
            <person name="Kumagai A."/>
            <person name="Itakura S."/>
            <person name="Fukuzumi Y."/>
            <person name="Fujimori Y."/>
            <person name="Komiyama M."/>
            <person name="Tashiro H."/>
            <person name="Tanigami A."/>
            <person name="Fujiwara T."/>
            <person name="Ono T."/>
            <person name="Yamada K."/>
            <person name="Fujii Y."/>
            <person name="Ozaki K."/>
            <person name="Hirao M."/>
            <person name="Ohmori Y."/>
            <person name="Kawabata A."/>
            <person name="Hikiji T."/>
            <person name="Kobatake N."/>
            <person name="Inagaki H."/>
            <person name="Ikema Y."/>
            <person name="Okamoto S."/>
            <person name="Okitani R."/>
            <person name="Kawakami T."/>
            <person name="Noguchi S."/>
            <person name="Itoh T."/>
            <person name="Shigeta K."/>
            <person name="Senba T."/>
            <person name="Matsumura K."/>
            <person name="Nakajima Y."/>
            <person name="Mizuno T."/>
            <person name="Morinaga M."/>
            <person name="Sasaki M."/>
            <person name="Togashi T."/>
            <person name="Oyama M."/>
            <person name="Hata H."/>
            <person name="Watanabe M."/>
            <person name="Komatsu T."/>
            <person name="Mizushima-Sugano J."/>
            <person name="Satoh T."/>
            <person name="Shirai Y."/>
            <person name="Takahashi Y."/>
            <person name="Nakagawa K."/>
            <person name="Okumura K."/>
            <person name="Nagase T."/>
            <person name="Nomura N."/>
            <person name="Kikuchi H."/>
            <person name="Masuho Y."/>
            <person name="Yamashita R."/>
            <person name="Nakai K."/>
            <person name="Yada T."/>
            <person name="Nakamura Y."/>
            <person name="Ohara O."/>
            <person name="Isogai T."/>
            <person name="Sugano S."/>
        </authorList>
    </citation>
    <scope>NUCLEOTIDE SEQUENCE [LARGE SCALE MRNA] (ISOFORM 2)</scope>
</reference>
<reference key="3">
    <citation type="submission" date="2005-03" db="EMBL/GenBank/DDBJ databases">
        <authorList>
            <person name="Totoki Y."/>
            <person name="Toyoda A."/>
            <person name="Takeda T."/>
            <person name="Sakaki Y."/>
            <person name="Tanaka A."/>
            <person name="Yokoyama S."/>
            <person name="Ohara O."/>
            <person name="Nagase T."/>
            <person name="Kikuno R.F."/>
        </authorList>
    </citation>
    <scope>NUCLEOTIDE SEQUENCE [LARGE SCALE MRNA] (ISOFORM 1)</scope>
    <scope>VARIANT GLU-1133</scope>
    <source>
        <tissue>Aortic endothelium</tissue>
    </source>
</reference>
<reference key="4">
    <citation type="journal article" date="2003" name="Science">
        <title>Human chromosome 7: DNA sequence and biology.</title>
        <authorList>
            <person name="Scherer S.W."/>
            <person name="Cheung J."/>
            <person name="MacDonald J.R."/>
            <person name="Osborne L.R."/>
            <person name="Nakabayashi K."/>
            <person name="Herbrick J.-A."/>
            <person name="Carson A.R."/>
            <person name="Parker-Katiraee L."/>
            <person name="Skaug J."/>
            <person name="Khaja R."/>
            <person name="Zhang J."/>
            <person name="Hudek A.K."/>
            <person name="Li M."/>
            <person name="Haddad M."/>
            <person name="Duggan G.E."/>
            <person name="Fernandez B.A."/>
            <person name="Kanematsu E."/>
            <person name="Gentles S."/>
            <person name="Christopoulos C.C."/>
            <person name="Choufani S."/>
            <person name="Kwasnicka D."/>
            <person name="Zheng X.H."/>
            <person name="Lai Z."/>
            <person name="Nusskern D.R."/>
            <person name="Zhang Q."/>
            <person name="Gu Z."/>
            <person name="Lu F."/>
            <person name="Zeesman S."/>
            <person name="Nowaczyk M.J."/>
            <person name="Teshima I."/>
            <person name="Chitayat D."/>
            <person name="Shuman C."/>
            <person name="Weksberg R."/>
            <person name="Zackai E.H."/>
            <person name="Grebe T.A."/>
            <person name="Cox S.R."/>
            <person name="Kirkpatrick S.J."/>
            <person name="Rahman N."/>
            <person name="Friedman J.M."/>
            <person name="Heng H.H.Q."/>
            <person name="Pelicci P.G."/>
            <person name="Lo-Coco F."/>
            <person name="Belloni E."/>
            <person name="Shaffer L.G."/>
            <person name="Pober B."/>
            <person name="Morton C.C."/>
            <person name="Gusella J.F."/>
            <person name="Bruns G.A.P."/>
            <person name="Korf B.R."/>
            <person name="Quade B.J."/>
            <person name="Ligon A.H."/>
            <person name="Ferguson H."/>
            <person name="Higgins A.W."/>
            <person name="Leach N.T."/>
            <person name="Herrick S.R."/>
            <person name="Lemyre E."/>
            <person name="Farra C.G."/>
            <person name="Kim H.-G."/>
            <person name="Summers A.M."/>
            <person name="Gripp K.W."/>
            <person name="Roberts W."/>
            <person name="Szatmari P."/>
            <person name="Winsor E.J.T."/>
            <person name="Grzeschik K.-H."/>
            <person name="Teebi A."/>
            <person name="Minassian B.A."/>
            <person name="Kere J."/>
            <person name="Armengol L."/>
            <person name="Pujana M.A."/>
            <person name="Estivill X."/>
            <person name="Wilson M.D."/>
            <person name="Koop B.F."/>
            <person name="Tosi S."/>
            <person name="Moore G.E."/>
            <person name="Boright A.P."/>
            <person name="Zlotorynski E."/>
            <person name="Kerem B."/>
            <person name="Kroisel P.M."/>
            <person name="Petek E."/>
            <person name="Oscier D.G."/>
            <person name="Mould S.J."/>
            <person name="Doehner H."/>
            <person name="Doehner K."/>
            <person name="Rommens J.M."/>
            <person name="Vincent J.B."/>
            <person name="Venter J.C."/>
            <person name="Li P.W."/>
            <person name="Mural R.J."/>
            <person name="Adams M.D."/>
            <person name="Tsui L.-C."/>
        </authorList>
    </citation>
    <scope>NUCLEOTIDE SEQUENCE [LARGE SCALE GENOMIC DNA]</scope>
</reference>
<reference key="5">
    <citation type="submission" date="2005-09" db="EMBL/GenBank/DDBJ databases">
        <authorList>
            <person name="Mural R.J."/>
            <person name="Istrail S."/>
            <person name="Sutton G.G."/>
            <person name="Florea L."/>
            <person name="Halpern A.L."/>
            <person name="Mobarry C.M."/>
            <person name="Lippert R."/>
            <person name="Walenz B."/>
            <person name="Shatkay H."/>
            <person name="Dew I."/>
            <person name="Miller J.R."/>
            <person name="Flanigan M.J."/>
            <person name="Edwards N.J."/>
            <person name="Bolanos R."/>
            <person name="Fasulo D."/>
            <person name="Halldorsson B.V."/>
            <person name="Hannenhalli S."/>
            <person name="Turner R."/>
            <person name="Yooseph S."/>
            <person name="Lu F."/>
            <person name="Nusskern D.R."/>
            <person name="Shue B.C."/>
            <person name="Zheng X.H."/>
            <person name="Zhong F."/>
            <person name="Delcher A.L."/>
            <person name="Huson D.H."/>
            <person name="Kravitz S.A."/>
            <person name="Mouchard L."/>
            <person name="Reinert K."/>
            <person name="Remington K.A."/>
            <person name="Clark A.G."/>
            <person name="Waterman M.S."/>
            <person name="Eichler E.E."/>
            <person name="Adams M.D."/>
            <person name="Hunkapiller M.W."/>
            <person name="Myers E.W."/>
            <person name="Venter J.C."/>
        </authorList>
    </citation>
    <scope>NUCLEOTIDE SEQUENCE [LARGE SCALE GENOMIC DNA]</scope>
</reference>
<reference key="6">
    <citation type="journal article" date="2004" name="Genome Res.">
        <title>The status, quality, and expansion of the NIH full-length cDNA project: the Mammalian Gene Collection (MGC).</title>
        <authorList>
            <consortium name="The MGC Project Team"/>
        </authorList>
    </citation>
    <scope>NUCLEOTIDE SEQUENCE [LARGE SCALE MRNA] (ISOFORM 1)</scope>
    <source>
        <tissue>Brain</tissue>
    </source>
</reference>
<reference key="7">
    <citation type="journal article" date="1996" name="Biochem. Biophys. Res. Commun.">
        <title>A cDNA cloning of human AEBP1 from primary cultured osteoblasts and its expression in a differentiating osteoblastic cell line.</title>
        <authorList>
            <person name="Ohno I."/>
            <person name="Hashimoto J."/>
            <person name="Shimizu K."/>
            <person name="Takaoka K."/>
            <person name="Ochi T."/>
            <person name="Matsubara K."/>
            <person name="Okubo K."/>
        </authorList>
    </citation>
    <scope>NUCLEOTIDE SEQUENCE [MRNA] OF 314-1158 (ISOFORM 1)</scope>
    <scope>TISSUE SPECIFICITY</scope>
    <source>
        <tissue>Cancellous bone</tissue>
    </source>
</reference>
<reference key="8">
    <citation type="journal article" date="2009" name="J. Proteome Res.">
        <title>Glycoproteomics analysis of human liver tissue by combination of multiple enzyme digestion and hydrazide chemistry.</title>
        <authorList>
            <person name="Chen R."/>
            <person name="Jiang X."/>
            <person name="Sun D."/>
            <person name="Han G."/>
            <person name="Wang F."/>
            <person name="Ye M."/>
            <person name="Wang L."/>
            <person name="Zou H."/>
        </authorList>
    </citation>
    <scope>GLYCOSYLATION [LARGE SCALE ANALYSIS] AT ASN-528 AND ASN-922</scope>
    <source>
        <tissue>Liver</tissue>
    </source>
</reference>
<reference key="9">
    <citation type="journal article" date="2014" name="J. Proteomics">
        <title>An enzyme assisted RP-RPLC approach for in-depth analysis of human liver phosphoproteome.</title>
        <authorList>
            <person name="Bian Y."/>
            <person name="Song C."/>
            <person name="Cheng K."/>
            <person name="Dong M."/>
            <person name="Wang F."/>
            <person name="Huang J."/>
            <person name="Sun D."/>
            <person name="Wang L."/>
            <person name="Ye M."/>
            <person name="Zou H."/>
        </authorList>
    </citation>
    <scope>IDENTIFICATION BY MASS SPECTROMETRY [LARGE SCALE ANALYSIS]</scope>
    <source>
        <tissue>Liver</tissue>
    </source>
</reference>
<reference key="10">
    <citation type="journal article" date="2016" name="Hum. Genet.">
        <title>Expanding the clinical and genetic heterogeneity of hereditary disorders of connective tissue.</title>
        <authorList>
            <person name="Alazami A.M."/>
            <person name="Al-Qattan S.M."/>
            <person name="Faqeih E."/>
            <person name="Alhashem A."/>
            <person name="Alshammari M."/>
            <person name="Alzahrani F."/>
            <person name="Al-Dosari M.S."/>
            <person name="Patel N."/>
            <person name="Alsagheir A."/>
            <person name="Binabbas B."/>
            <person name="Alzaidan H."/>
            <person name="Alsiddiky A."/>
            <person name="Alharbi N."/>
            <person name="Alfadhel M."/>
            <person name="Kentab A."/>
            <person name="Daza R.M."/>
            <person name="Kircher M."/>
            <person name="Shendure J."/>
            <person name="Hashem M."/>
            <person name="Alshahrani S."/>
            <person name="Rahbeeni Z."/>
            <person name="Khalifa O."/>
            <person name="Shaheen R."/>
            <person name="Alkuraya F.S."/>
        </authorList>
    </citation>
    <scope>INVOLVEMENT IN EDSCLL2</scope>
</reference>
<reference key="11">
    <citation type="journal article" date="2018" name="Am. J. Hum. Genet.">
        <title>Bi-allelic alterations in AEBP1 lead to defective collagen assembly and connective tissue structure resulting in a variant of Ehlers-Danlos syndrome.</title>
        <authorList>
            <person name="Blackburn P.R."/>
            <person name="Xu Z."/>
            <person name="Tumelty K.E."/>
            <person name="Zhao R.W."/>
            <person name="Monis W.J."/>
            <person name="Harris K.G."/>
            <person name="Gass J.M."/>
            <person name="Cousin M.A."/>
            <person name="Boczek N.J."/>
            <person name="Mitkov M.V."/>
            <person name="Cappel M.A."/>
            <person name="Francomano C.A."/>
            <person name="Parisi J.E."/>
            <person name="Klee E.W."/>
            <person name="Faqeih E."/>
            <person name="Alkuraya F.S."/>
            <person name="Layne M.D."/>
            <person name="McDonnell N.B."/>
            <person name="Atwal P.S."/>
        </authorList>
    </citation>
    <scope>FUNCTION</scope>
    <scope>INTERACTION WITH COLLAGEN</scope>
    <scope>DOMAIN</scope>
    <scope>INVOLVEMENT IN EDSCLL2</scope>
    <scope>VARIANT EDSCLL2 581-CYS--PHE-1158 DEL</scope>
</reference>
<evidence type="ECO:0000250" key="1"/>
<evidence type="ECO:0000250" key="2">
    <source>
        <dbReference type="UniProtKB" id="Q640N1"/>
    </source>
</evidence>
<evidence type="ECO:0000255" key="3"/>
<evidence type="ECO:0000255" key="4">
    <source>
        <dbReference type="PROSITE-ProRule" id="PRU00081"/>
    </source>
</evidence>
<evidence type="ECO:0000255" key="5">
    <source>
        <dbReference type="PROSITE-ProRule" id="PRU01379"/>
    </source>
</evidence>
<evidence type="ECO:0000256" key="6">
    <source>
        <dbReference type="SAM" id="MobiDB-lite"/>
    </source>
</evidence>
<evidence type="ECO:0000269" key="7">
    <source>
    </source>
</evidence>
<evidence type="ECO:0000269" key="8">
    <source>
    </source>
</evidence>
<evidence type="ECO:0000269" key="9">
    <source>
    </source>
</evidence>
<evidence type="ECO:0000269" key="10">
    <source>
    </source>
</evidence>
<evidence type="ECO:0000269" key="11">
    <source ref="3"/>
</evidence>
<evidence type="ECO:0000303" key="12">
    <source>
    </source>
</evidence>
<evidence type="ECO:0000305" key="13"/>
<gene>
    <name type="primary">AEBP1</name>
    <name type="synonym">ACLP</name>
</gene>
<protein>
    <recommendedName>
        <fullName>Adipocyte enhancer-binding protein 1</fullName>
        <shortName>AE-binding protein 1</shortName>
    </recommendedName>
    <alternativeName>
        <fullName>Aortic carboxypeptidase-like protein</fullName>
    </alternativeName>
</protein>
<accession>Q8IUX7</accession>
<accession>Q14113</accession>
<accession>Q59ER7</accession>
<accession>Q6ZSC7</accession>
<accession>Q7KZ79</accession>